<sequence length="54" mass="6590">MAAKSQIIEFSLKCTECNNRNYYKKKNRNYKEKIELKKYCPHCRKHTLHVESKI</sequence>
<gene>
    <name evidence="1" type="primary">rpmG</name>
    <name type="ordered locus">Pmob_0362</name>
</gene>
<reference key="1">
    <citation type="submission" date="2007-11" db="EMBL/GenBank/DDBJ databases">
        <title>Complete sequence of Petroga mobilis SJ95.</title>
        <authorList>
            <consortium name="US DOE Joint Genome Institute"/>
            <person name="Copeland A."/>
            <person name="Lucas S."/>
            <person name="Lapidus A."/>
            <person name="Barry K."/>
            <person name="Glavina del Rio T."/>
            <person name="Dalin E."/>
            <person name="Tice H."/>
            <person name="Pitluck S."/>
            <person name="Meincke L."/>
            <person name="Brettin T."/>
            <person name="Bruce D."/>
            <person name="Detter J.C."/>
            <person name="Han C."/>
            <person name="Kuske C.R."/>
            <person name="Schmutz J."/>
            <person name="Larimer F."/>
            <person name="Land M."/>
            <person name="Hauser L."/>
            <person name="Kyrpides N."/>
            <person name="Mikhailova N."/>
            <person name="Noll K."/>
            <person name="Richardson P."/>
        </authorList>
    </citation>
    <scope>NUCLEOTIDE SEQUENCE [LARGE SCALE GENOMIC DNA]</scope>
    <source>
        <strain>DSM 10674 / SJ95</strain>
    </source>
</reference>
<name>RL33_PETMO</name>
<proteinExistence type="inferred from homology"/>
<evidence type="ECO:0000255" key="1">
    <source>
        <dbReference type="HAMAP-Rule" id="MF_00294"/>
    </source>
</evidence>
<evidence type="ECO:0000305" key="2"/>
<dbReference type="EMBL" id="CP000879">
    <property type="protein sequence ID" value="ABX31104.1"/>
    <property type="molecule type" value="Genomic_DNA"/>
</dbReference>
<dbReference type="SMR" id="A9BF40"/>
<dbReference type="STRING" id="403833.Pmob_0362"/>
<dbReference type="KEGG" id="pmo:Pmob_0362"/>
<dbReference type="eggNOG" id="COG0267">
    <property type="taxonomic scope" value="Bacteria"/>
</dbReference>
<dbReference type="HOGENOM" id="CLU_190949_0_2_0"/>
<dbReference type="Proteomes" id="UP000000789">
    <property type="component" value="Chromosome"/>
</dbReference>
<dbReference type="GO" id="GO:0005737">
    <property type="term" value="C:cytoplasm"/>
    <property type="evidence" value="ECO:0007669"/>
    <property type="project" value="UniProtKB-ARBA"/>
</dbReference>
<dbReference type="GO" id="GO:1990904">
    <property type="term" value="C:ribonucleoprotein complex"/>
    <property type="evidence" value="ECO:0007669"/>
    <property type="project" value="UniProtKB-KW"/>
</dbReference>
<dbReference type="GO" id="GO:0005840">
    <property type="term" value="C:ribosome"/>
    <property type="evidence" value="ECO:0007669"/>
    <property type="project" value="UniProtKB-KW"/>
</dbReference>
<dbReference type="GO" id="GO:0003735">
    <property type="term" value="F:structural constituent of ribosome"/>
    <property type="evidence" value="ECO:0007669"/>
    <property type="project" value="InterPro"/>
</dbReference>
<dbReference type="GO" id="GO:0006412">
    <property type="term" value="P:translation"/>
    <property type="evidence" value="ECO:0007669"/>
    <property type="project" value="UniProtKB-UniRule"/>
</dbReference>
<dbReference type="Gene3D" id="2.20.28.120">
    <property type="entry name" value="Ribosomal protein L33"/>
    <property type="match status" value="1"/>
</dbReference>
<dbReference type="HAMAP" id="MF_00294">
    <property type="entry name" value="Ribosomal_bL33"/>
    <property type="match status" value="1"/>
</dbReference>
<dbReference type="InterPro" id="IPR001705">
    <property type="entry name" value="Ribosomal_bL33"/>
</dbReference>
<dbReference type="InterPro" id="IPR038584">
    <property type="entry name" value="Ribosomal_bL33_sf"/>
</dbReference>
<dbReference type="InterPro" id="IPR011332">
    <property type="entry name" value="Ribosomal_zn-bd"/>
</dbReference>
<dbReference type="NCBIfam" id="NF001764">
    <property type="entry name" value="PRK00504.1"/>
    <property type="match status" value="1"/>
</dbReference>
<dbReference type="NCBIfam" id="NF001860">
    <property type="entry name" value="PRK00595.1"/>
    <property type="match status" value="1"/>
</dbReference>
<dbReference type="NCBIfam" id="TIGR01023">
    <property type="entry name" value="rpmG_bact"/>
    <property type="match status" value="1"/>
</dbReference>
<dbReference type="Pfam" id="PF00471">
    <property type="entry name" value="Ribosomal_L33"/>
    <property type="match status" value="1"/>
</dbReference>
<dbReference type="SUPFAM" id="SSF57829">
    <property type="entry name" value="Zn-binding ribosomal proteins"/>
    <property type="match status" value="1"/>
</dbReference>
<accession>A9BF40</accession>
<keyword id="KW-0687">Ribonucleoprotein</keyword>
<keyword id="KW-0689">Ribosomal protein</keyword>
<protein>
    <recommendedName>
        <fullName evidence="1">Large ribosomal subunit protein bL33</fullName>
    </recommendedName>
    <alternativeName>
        <fullName evidence="2">50S ribosomal protein L33</fullName>
    </alternativeName>
</protein>
<feature type="chain" id="PRO_0000356607" description="Large ribosomal subunit protein bL33">
    <location>
        <begin position="1"/>
        <end position="54"/>
    </location>
</feature>
<comment type="similarity">
    <text evidence="1">Belongs to the bacterial ribosomal protein bL33 family.</text>
</comment>
<organism>
    <name type="scientific">Petrotoga mobilis (strain DSM 10674 / SJ95)</name>
    <dbReference type="NCBI Taxonomy" id="403833"/>
    <lineage>
        <taxon>Bacteria</taxon>
        <taxon>Thermotogati</taxon>
        <taxon>Thermotogota</taxon>
        <taxon>Thermotogae</taxon>
        <taxon>Petrotogales</taxon>
        <taxon>Petrotogaceae</taxon>
        <taxon>Petrotoga</taxon>
    </lineage>
</organism>